<evidence type="ECO:0000250" key="1"/>
<evidence type="ECO:0000305" key="2"/>
<gene>
    <name type="primary">prfB</name>
    <name type="ordered locus">BB_0074</name>
</gene>
<name>RF2_BORBU</name>
<organism>
    <name type="scientific">Borreliella burgdorferi (strain ATCC 35210 / DSM 4680 / CIP 102532 / B31)</name>
    <name type="common">Borrelia burgdorferi</name>
    <dbReference type="NCBI Taxonomy" id="224326"/>
    <lineage>
        <taxon>Bacteria</taxon>
        <taxon>Pseudomonadati</taxon>
        <taxon>Spirochaetota</taxon>
        <taxon>Spirochaetia</taxon>
        <taxon>Spirochaetales</taxon>
        <taxon>Borreliaceae</taxon>
        <taxon>Borreliella</taxon>
    </lineage>
</organism>
<dbReference type="EMBL" id="AE000783">
    <property type="protein sequence ID" value="AAC66459.2"/>
    <property type="molecule type" value="Genomic_DNA"/>
</dbReference>
<dbReference type="PIR" id="B70109">
    <property type="entry name" value="B70109"/>
</dbReference>
<dbReference type="RefSeq" id="NP_212208.2">
    <property type="nucleotide sequence ID" value="NC_001318.1"/>
</dbReference>
<dbReference type="SMR" id="O51101"/>
<dbReference type="STRING" id="224326.BB_0074"/>
<dbReference type="PaxDb" id="224326-BB_0074"/>
<dbReference type="EnsemblBacteria" id="AAC66459">
    <property type="protein sequence ID" value="AAC66459"/>
    <property type="gene ID" value="BB_0074"/>
</dbReference>
<dbReference type="KEGG" id="bbu:BB_0074"/>
<dbReference type="PATRIC" id="fig|224326.49.peg.472"/>
<dbReference type="HOGENOM" id="CLU_222237_0_0_12"/>
<dbReference type="OrthoDB" id="9806673at2"/>
<dbReference type="Proteomes" id="UP000001807">
    <property type="component" value="Chromosome"/>
</dbReference>
<dbReference type="GO" id="GO:0005737">
    <property type="term" value="C:cytoplasm"/>
    <property type="evidence" value="ECO:0007669"/>
    <property type="project" value="UniProtKB-SubCell"/>
</dbReference>
<dbReference type="GO" id="GO:0016149">
    <property type="term" value="F:translation release factor activity, codon specific"/>
    <property type="evidence" value="ECO:0007669"/>
    <property type="project" value="UniProtKB-UniRule"/>
</dbReference>
<dbReference type="GO" id="GO:0075523">
    <property type="term" value="P:viral translational frameshifting"/>
    <property type="evidence" value="ECO:0007669"/>
    <property type="project" value="UniProtKB-KW"/>
</dbReference>
<dbReference type="FunFam" id="3.30.160.20:FF:000010">
    <property type="entry name" value="Peptide chain release factor 2"/>
    <property type="match status" value="1"/>
</dbReference>
<dbReference type="Gene3D" id="3.30.160.20">
    <property type="match status" value="1"/>
</dbReference>
<dbReference type="Gene3D" id="3.30.70.1660">
    <property type="match status" value="1"/>
</dbReference>
<dbReference type="Gene3D" id="1.20.58.410">
    <property type="entry name" value="Release factor"/>
    <property type="match status" value="1"/>
</dbReference>
<dbReference type="HAMAP" id="MF_00094">
    <property type="entry name" value="Rel_fac_2"/>
    <property type="match status" value="1"/>
</dbReference>
<dbReference type="InterPro" id="IPR005139">
    <property type="entry name" value="PCRF"/>
</dbReference>
<dbReference type="InterPro" id="IPR000352">
    <property type="entry name" value="Pep_chain_release_fac_I"/>
</dbReference>
<dbReference type="InterPro" id="IPR045853">
    <property type="entry name" value="Pep_chain_release_fac_I_sf"/>
</dbReference>
<dbReference type="InterPro" id="IPR004374">
    <property type="entry name" value="PrfB"/>
</dbReference>
<dbReference type="NCBIfam" id="TIGR00020">
    <property type="entry name" value="prfB"/>
    <property type="match status" value="1"/>
</dbReference>
<dbReference type="PANTHER" id="PTHR43116:SF3">
    <property type="entry name" value="CLASS I PEPTIDE CHAIN RELEASE FACTOR"/>
    <property type="match status" value="1"/>
</dbReference>
<dbReference type="PANTHER" id="PTHR43116">
    <property type="entry name" value="PEPTIDE CHAIN RELEASE FACTOR 2"/>
    <property type="match status" value="1"/>
</dbReference>
<dbReference type="Pfam" id="PF03462">
    <property type="entry name" value="PCRF"/>
    <property type="match status" value="1"/>
</dbReference>
<dbReference type="Pfam" id="PF00472">
    <property type="entry name" value="RF-1"/>
    <property type="match status" value="1"/>
</dbReference>
<dbReference type="SMART" id="SM00937">
    <property type="entry name" value="PCRF"/>
    <property type="match status" value="1"/>
</dbReference>
<dbReference type="SUPFAM" id="SSF75620">
    <property type="entry name" value="Release factor"/>
    <property type="match status" value="1"/>
</dbReference>
<dbReference type="PROSITE" id="PS00745">
    <property type="entry name" value="RF_PROK_I"/>
    <property type="match status" value="1"/>
</dbReference>
<proteinExistence type="inferred from homology"/>
<feature type="chain" id="PRO_0000166804" description="Peptide chain release factor 2">
    <location>
        <begin position="1"/>
        <end position="358"/>
    </location>
</feature>
<feature type="modified residue" description="N5-methylglutamine" evidence="1">
    <location>
        <position position="242"/>
    </location>
</feature>
<keyword id="KW-0963">Cytoplasm</keyword>
<keyword id="KW-0488">Methylation</keyword>
<keyword id="KW-0648">Protein biosynthesis</keyword>
<keyword id="KW-1185">Reference proteome</keyword>
<keyword id="KW-0688">Ribosomal frameshifting</keyword>
<comment type="function">
    <text evidence="1">Peptide chain release factor 2 directs the termination of translation in response to the peptide chain termination codons UGA and UAA.</text>
</comment>
<comment type="subcellular location">
    <subcellularLocation>
        <location evidence="1">Cytoplasm</location>
    </subcellularLocation>
</comment>
<comment type="PTM">
    <text evidence="1">Methylated by PrmC. Methylation increases the termination efficiency of RF2 (By similarity).</text>
</comment>
<comment type="miscellaneous">
    <text evidence="1">The gene for this protein contains a UGA in-frame termination codon after Leu-19; a naturally occurring frameshift enables complete translation of RF-2. This provides a mechanism for the protein to regulate its own production (By similarity).</text>
</comment>
<comment type="similarity">
    <text evidence="2">Belongs to the prokaryotic/mitochondrial release factor family.</text>
</comment>
<reference key="1">
    <citation type="journal article" date="1997" name="Nature">
        <title>Genomic sequence of a Lyme disease spirochaete, Borrelia burgdorferi.</title>
        <authorList>
            <person name="Fraser C.M."/>
            <person name="Casjens S."/>
            <person name="Huang W.M."/>
            <person name="Sutton G.G."/>
            <person name="Clayton R.A."/>
            <person name="Lathigra R."/>
            <person name="White O."/>
            <person name="Ketchum K.A."/>
            <person name="Dodson R.J."/>
            <person name="Hickey E.K."/>
            <person name="Gwinn M.L."/>
            <person name="Dougherty B.A."/>
            <person name="Tomb J.-F."/>
            <person name="Fleischmann R.D."/>
            <person name="Richardson D.L."/>
            <person name="Peterson J.D."/>
            <person name="Kerlavage A.R."/>
            <person name="Quackenbush J."/>
            <person name="Salzberg S.L."/>
            <person name="Hanson M."/>
            <person name="van Vugt R."/>
            <person name="Palmer N."/>
            <person name="Adams M.D."/>
            <person name="Gocayne J.D."/>
            <person name="Weidman J.F."/>
            <person name="Utterback T.R."/>
            <person name="Watthey L."/>
            <person name="McDonald L.A."/>
            <person name="Artiach P."/>
            <person name="Bowman C."/>
            <person name="Garland S.A."/>
            <person name="Fujii C."/>
            <person name="Cotton M.D."/>
            <person name="Horst K."/>
            <person name="Roberts K.M."/>
            <person name="Hatch B."/>
            <person name="Smith H.O."/>
            <person name="Venter J.C."/>
        </authorList>
    </citation>
    <scope>NUCLEOTIDE SEQUENCE [LARGE SCALE GENOMIC DNA]</scope>
    <source>
        <strain>ATCC 35210 / DSM 4680 / CIP 102532 / B31</strain>
    </source>
</reference>
<reference key="2">
    <citation type="submission" date="2011-11" db="EMBL/GenBank/DDBJ databases">
        <authorList>
            <person name="Mongodin E.F."/>
            <person name="Fraser-Liggett C.M."/>
            <person name="Qiu W.-G."/>
            <person name="Dunn J.J."/>
            <person name="Luft B.J."/>
            <person name="Schutzer S.E."/>
            <person name="Casjens S.R."/>
        </authorList>
    </citation>
    <scope>SEQUENCE REVISION</scope>
</reference>
<accession>O51101</accession>
<sequence length="358" mass="41652">MKEKINTLLKHAEDIWRKLCKNEIQAKIEKYEKEINQKNFWNDPKRAQKVIKAQSILKNKIDPWEELINKIKDLSDLCEIAENEKDTNGLEIEFNTLEKQYKDLLTISYFKEELDANNAFLTIHSGAGGTEACDWVAMLYRMYSRYAERKKYKTELIDLLEAEGGIKSVTIEIKGEYAYGLLKSEVGIHRLIRISPFDAAKKRHTSFASVFVDPVIDDKIEITIKPEDIRIDTYRASGAGGQHVNKTSSAVRITHIETGIVTQSQSDRSQHKNKDLAMKVLKSRLYEYYKSKEDEKNKSKQDTKKEISWGNQIRSYVFQPYNLVKDHRTKFENSNTTSVMDGNIDNFIEEYLKWKSLN</sequence>
<protein>
    <recommendedName>
        <fullName>Peptide chain release factor 2</fullName>
        <shortName>RF-2</shortName>
    </recommendedName>
</protein>